<evidence type="ECO:0000255" key="1">
    <source>
        <dbReference type="HAMAP-Rule" id="MF_00211"/>
    </source>
</evidence>
<comment type="function">
    <text evidence="1">Catalyzes the transfer of the phosphoribosyl group of 5-phosphorylribose-1-pyrophosphate (PRPP) to anthranilate to yield N-(5'-phosphoribosyl)-anthranilate (PRA).</text>
</comment>
<comment type="catalytic activity">
    <reaction evidence="1">
        <text>N-(5-phospho-beta-D-ribosyl)anthranilate + diphosphate = 5-phospho-alpha-D-ribose 1-diphosphate + anthranilate</text>
        <dbReference type="Rhea" id="RHEA:11768"/>
        <dbReference type="ChEBI" id="CHEBI:16567"/>
        <dbReference type="ChEBI" id="CHEBI:18277"/>
        <dbReference type="ChEBI" id="CHEBI:33019"/>
        <dbReference type="ChEBI" id="CHEBI:58017"/>
        <dbReference type="EC" id="2.4.2.18"/>
    </reaction>
</comment>
<comment type="cofactor">
    <cofactor evidence="1">
        <name>Mg(2+)</name>
        <dbReference type="ChEBI" id="CHEBI:18420"/>
    </cofactor>
    <text evidence="1">Binds 2 magnesium ions per monomer.</text>
</comment>
<comment type="pathway">
    <text evidence="1">Amino-acid biosynthesis; L-tryptophan biosynthesis; L-tryptophan from chorismate: step 2/5.</text>
</comment>
<comment type="subunit">
    <text evidence="1">Homodimer.</text>
</comment>
<comment type="similarity">
    <text evidence="1">Belongs to the anthranilate phosphoribosyltransferase family.</text>
</comment>
<accession>Q88QR7</accession>
<sequence length="349" mass="37245">MDIKSALSRIVGQLDLTTEEMREVMRQIMTGQCSEAQIGAFLMGMRMKSESIDEIVGAVSVMRELAEKVELQSLDGVVDIVGTGGDGANIFNVSTASSFVLAAAGCPVAKHGNRAVSGKSGSADLLEAAGIYLNLTPTQVARCIDSLGIGFMFAQSHHSAMKHAAGPRRELGLRTLFNMLGPLTNPAGVKHQVVGVFAQTLCRPLAEVLQRLGSKHVLVVHSKDGLDEFSLAAPTFVAELKNDEITEYWVEPEDLGMKSQSLHGLAVESPQASLELIRDALGRRKTENGQKAAEMIVLNAGAALYAADHAMSLKAGVELAHDVLHTGLAWEKLQELGAFTAVFKVENEA</sequence>
<dbReference type="EC" id="2.4.2.18" evidence="1"/>
<dbReference type="EMBL" id="AE015451">
    <property type="protein sequence ID" value="AAN66051.1"/>
    <property type="molecule type" value="Genomic_DNA"/>
</dbReference>
<dbReference type="RefSeq" id="NP_742587.1">
    <property type="nucleotide sequence ID" value="NC_002947.4"/>
</dbReference>
<dbReference type="RefSeq" id="WP_010951756.1">
    <property type="nucleotide sequence ID" value="NZ_CP169744.1"/>
</dbReference>
<dbReference type="SMR" id="Q88QR7"/>
<dbReference type="STRING" id="160488.PP_0421"/>
<dbReference type="PaxDb" id="160488-PP_0421"/>
<dbReference type="GeneID" id="83677712"/>
<dbReference type="KEGG" id="ppu:PP_0421"/>
<dbReference type="PATRIC" id="fig|160488.4.peg.452"/>
<dbReference type="eggNOG" id="COG0547">
    <property type="taxonomic scope" value="Bacteria"/>
</dbReference>
<dbReference type="HOGENOM" id="CLU_034315_2_1_6"/>
<dbReference type="OrthoDB" id="9806430at2"/>
<dbReference type="PhylomeDB" id="Q88QR7"/>
<dbReference type="BioCyc" id="PPUT160488:G1G01-457-MONOMER"/>
<dbReference type="UniPathway" id="UPA00035">
    <property type="reaction ID" value="UER00041"/>
</dbReference>
<dbReference type="Proteomes" id="UP000000556">
    <property type="component" value="Chromosome"/>
</dbReference>
<dbReference type="GO" id="GO:0005829">
    <property type="term" value="C:cytosol"/>
    <property type="evidence" value="ECO:0007669"/>
    <property type="project" value="TreeGrafter"/>
</dbReference>
<dbReference type="GO" id="GO:0004048">
    <property type="term" value="F:anthranilate phosphoribosyltransferase activity"/>
    <property type="evidence" value="ECO:0007669"/>
    <property type="project" value="UniProtKB-UniRule"/>
</dbReference>
<dbReference type="GO" id="GO:0000287">
    <property type="term" value="F:magnesium ion binding"/>
    <property type="evidence" value="ECO:0007669"/>
    <property type="project" value="UniProtKB-UniRule"/>
</dbReference>
<dbReference type="GO" id="GO:0000162">
    <property type="term" value="P:L-tryptophan biosynthetic process"/>
    <property type="evidence" value="ECO:0007669"/>
    <property type="project" value="UniProtKB-UniRule"/>
</dbReference>
<dbReference type="FunFam" id="1.20.970.10:FF:000006">
    <property type="entry name" value="Anthranilate phosphoribosyltransferase"/>
    <property type="match status" value="1"/>
</dbReference>
<dbReference type="FunFam" id="3.40.1030.10:FF:000002">
    <property type="entry name" value="Anthranilate phosphoribosyltransferase"/>
    <property type="match status" value="1"/>
</dbReference>
<dbReference type="Gene3D" id="3.40.1030.10">
    <property type="entry name" value="Nucleoside phosphorylase/phosphoribosyltransferase catalytic domain"/>
    <property type="match status" value="1"/>
</dbReference>
<dbReference type="Gene3D" id="1.20.970.10">
    <property type="entry name" value="Transferase, Pyrimidine Nucleoside Phosphorylase, Chain C"/>
    <property type="match status" value="1"/>
</dbReference>
<dbReference type="HAMAP" id="MF_00211">
    <property type="entry name" value="TrpD"/>
    <property type="match status" value="1"/>
</dbReference>
<dbReference type="InterPro" id="IPR005940">
    <property type="entry name" value="Anthranilate_Pribosyl_Tfrase"/>
</dbReference>
<dbReference type="InterPro" id="IPR000312">
    <property type="entry name" value="Glycosyl_Trfase_fam3"/>
</dbReference>
<dbReference type="InterPro" id="IPR017459">
    <property type="entry name" value="Glycosyl_Trfase_fam3_N_dom"/>
</dbReference>
<dbReference type="InterPro" id="IPR036320">
    <property type="entry name" value="Glycosyl_Trfase_fam3_N_dom_sf"/>
</dbReference>
<dbReference type="InterPro" id="IPR035902">
    <property type="entry name" value="Nuc_phospho_transferase"/>
</dbReference>
<dbReference type="NCBIfam" id="TIGR01245">
    <property type="entry name" value="trpD"/>
    <property type="match status" value="1"/>
</dbReference>
<dbReference type="PANTHER" id="PTHR43285">
    <property type="entry name" value="ANTHRANILATE PHOSPHORIBOSYLTRANSFERASE"/>
    <property type="match status" value="1"/>
</dbReference>
<dbReference type="PANTHER" id="PTHR43285:SF2">
    <property type="entry name" value="ANTHRANILATE PHOSPHORIBOSYLTRANSFERASE"/>
    <property type="match status" value="1"/>
</dbReference>
<dbReference type="Pfam" id="PF02885">
    <property type="entry name" value="Glycos_trans_3N"/>
    <property type="match status" value="1"/>
</dbReference>
<dbReference type="Pfam" id="PF00591">
    <property type="entry name" value="Glycos_transf_3"/>
    <property type="match status" value="1"/>
</dbReference>
<dbReference type="SUPFAM" id="SSF52418">
    <property type="entry name" value="Nucleoside phosphorylase/phosphoribosyltransferase catalytic domain"/>
    <property type="match status" value="1"/>
</dbReference>
<dbReference type="SUPFAM" id="SSF47648">
    <property type="entry name" value="Nucleoside phosphorylase/phosphoribosyltransferase N-terminal domain"/>
    <property type="match status" value="1"/>
</dbReference>
<proteinExistence type="inferred from homology"/>
<feature type="chain" id="PRO_0000154469" description="Anthranilate phosphoribosyltransferase">
    <location>
        <begin position="1"/>
        <end position="349"/>
    </location>
</feature>
<feature type="binding site" evidence="1">
    <location>
        <position position="82"/>
    </location>
    <ligand>
        <name>5-phospho-alpha-D-ribose 1-diphosphate</name>
        <dbReference type="ChEBI" id="CHEBI:58017"/>
    </ligand>
</feature>
<feature type="binding site" evidence="1">
    <location>
        <position position="82"/>
    </location>
    <ligand>
        <name>anthranilate</name>
        <dbReference type="ChEBI" id="CHEBI:16567"/>
        <label>1</label>
    </ligand>
</feature>
<feature type="binding site" evidence="1">
    <location>
        <begin position="85"/>
        <end position="86"/>
    </location>
    <ligand>
        <name>5-phospho-alpha-D-ribose 1-diphosphate</name>
        <dbReference type="ChEBI" id="CHEBI:58017"/>
    </ligand>
</feature>
<feature type="binding site" evidence="1">
    <location>
        <begin position="92"/>
        <end position="95"/>
    </location>
    <ligand>
        <name>5-phospho-alpha-D-ribose 1-diphosphate</name>
        <dbReference type="ChEBI" id="CHEBI:58017"/>
    </ligand>
</feature>
<feature type="binding site" evidence="1">
    <location>
        <position position="94"/>
    </location>
    <ligand>
        <name>Mg(2+)</name>
        <dbReference type="ChEBI" id="CHEBI:18420"/>
        <label>1</label>
    </ligand>
</feature>
<feature type="binding site" evidence="1">
    <location>
        <begin position="110"/>
        <end position="118"/>
    </location>
    <ligand>
        <name>5-phospho-alpha-D-ribose 1-diphosphate</name>
        <dbReference type="ChEBI" id="CHEBI:58017"/>
    </ligand>
</feature>
<feature type="binding site" evidence="1">
    <location>
        <position position="113"/>
    </location>
    <ligand>
        <name>anthranilate</name>
        <dbReference type="ChEBI" id="CHEBI:16567"/>
        <label>1</label>
    </ligand>
</feature>
<feature type="binding site" evidence="1">
    <location>
        <position position="122"/>
    </location>
    <ligand>
        <name>5-phospho-alpha-D-ribose 1-diphosphate</name>
        <dbReference type="ChEBI" id="CHEBI:58017"/>
    </ligand>
</feature>
<feature type="binding site" evidence="1">
    <location>
        <position position="168"/>
    </location>
    <ligand>
        <name>anthranilate</name>
        <dbReference type="ChEBI" id="CHEBI:16567"/>
        <label>2</label>
    </ligand>
</feature>
<feature type="binding site" evidence="1">
    <location>
        <position position="227"/>
    </location>
    <ligand>
        <name>Mg(2+)</name>
        <dbReference type="ChEBI" id="CHEBI:18420"/>
        <label>2</label>
    </ligand>
</feature>
<feature type="binding site" evidence="1">
    <location>
        <position position="228"/>
    </location>
    <ligand>
        <name>Mg(2+)</name>
        <dbReference type="ChEBI" id="CHEBI:18420"/>
        <label>1</label>
    </ligand>
</feature>
<feature type="binding site" evidence="1">
    <location>
        <position position="228"/>
    </location>
    <ligand>
        <name>Mg(2+)</name>
        <dbReference type="ChEBI" id="CHEBI:18420"/>
        <label>2</label>
    </ligand>
</feature>
<organism>
    <name type="scientific">Pseudomonas putida (strain ATCC 47054 / DSM 6125 / CFBP 8728 / NCIMB 11950 / KT2440)</name>
    <dbReference type="NCBI Taxonomy" id="160488"/>
    <lineage>
        <taxon>Bacteria</taxon>
        <taxon>Pseudomonadati</taxon>
        <taxon>Pseudomonadota</taxon>
        <taxon>Gammaproteobacteria</taxon>
        <taxon>Pseudomonadales</taxon>
        <taxon>Pseudomonadaceae</taxon>
        <taxon>Pseudomonas</taxon>
    </lineage>
</organism>
<name>TRPD_PSEPK</name>
<keyword id="KW-0028">Amino-acid biosynthesis</keyword>
<keyword id="KW-0057">Aromatic amino acid biosynthesis</keyword>
<keyword id="KW-0328">Glycosyltransferase</keyword>
<keyword id="KW-0460">Magnesium</keyword>
<keyword id="KW-0479">Metal-binding</keyword>
<keyword id="KW-1185">Reference proteome</keyword>
<keyword id="KW-0808">Transferase</keyword>
<keyword id="KW-0822">Tryptophan biosynthesis</keyword>
<reference key="1">
    <citation type="journal article" date="2002" name="Environ. Microbiol.">
        <title>Complete genome sequence and comparative analysis of the metabolically versatile Pseudomonas putida KT2440.</title>
        <authorList>
            <person name="Nelson K.E."/>
            <person name="Weinel C."/>
            <person name="Paulsen I.T."/>
            <person name="Dodson R.J."/>
            <person name="Hilbert H."/>
            <person name="Martins dos Santos V.A.P."/>
            <person name="Fouts D.E."/>
            <person name="Gill S.R."/>
            <person name="Pop M."/>
            <person name="Holmes M."/>
            <person name="Brinkac L.M."/>
            <person name="Beanan M.J."/>
            <person name="DeBoy R.T."/>
            <person name="Daugherty S.C."/>
            <person name="Kolonay J.F."/>
            <person name="Madupu R."/>
            <person name="Nelson W.C."/>
            <person name="White O."/>
            <person name="Peterson J.D."/>
            <person name="Khouri H.M."/>
            <person name="Hance I."/>
            <person name="Chris Lee P."/>
            <person name="Holtzapple E.K."/>
            <person name="Scanlan D."/>
            <person name="Tran K."/>
            <person name="Moazzez A."/>
            <person name="Utterback T.R."/>
            <person name="Rizzo M."/>
            <person name="Lee K."/>
            <person name="Kosack D."/>
            <person name="Moestl D."/>
            <person name="Wedler H."/>
            <person name="Lauber J."/>
            <person name="Stjepandic D."/>
            <person name="Hoheisel J."/>
            <person name="Straetz M."/>
            <person name="Heim S."/>
            <person name="Kiewitz C."/>
            <person name="Eisen J.A."/>
            <person name="Timmis K.N."/>
            <person name="Duesterhoeft A."/>
            <person name="Tuemmler B."/>
            <person name="Fraser C.M."/>
        </authorList>
    </citation>
    <scope>NUCLEOTIDE SEQUENCE [LARGE SCALE GENOMIC DNA]</scope>
    <source>
        <strain>ATCC 47054 / DSM 6125 / CFBP 8728 / NCIMB 11950 / KT2440</strain>
    </source>
</reference>
<protein>
    <recommendedName>
        <fullName evidence="1">Anthranilate phosphoribosyltransferase</fullName>
        <ecNumber evidence="1">2.4.2.18</ecNumber>
    </recommendedName>
</protein>
<gene>
    <name evidence="1" type="primary">trpD</name>
    <name type="ordered locus">PP_0421</name>
</gene>